<comment type="similarity">
    <text evidence="1">Belongs to the bacterial ribosomal protein bL33 family.</text>
</comment>
<keyword id="KW-0687">Ribonucleoprotein</keyword>
<keyword id="KW-0689">Ribosomal protein</keyword>
<dbReference type="EMBL" id="AE017198">
    <property type="protein sequence ID" value="AAS08398.1"/>
    <property type="molecule type" value="Genomic_DNA"/>
</dbReference>
<dbReference type="SMR" id="Q74L17"/>
<dbReference type="KEGG" id="ljo:LJ_0408b"/>
<dbReference type="eggNOG" id="COG0267">
    <property type="taxonomic scope" value="Bacteria"/>
</dbReference>
<dbReference type="HOGENOM" id="CLU_190949_0_1_9"/>
<dbReference type="Proteomes" id="UP000000581">
    <property type="component" value="Chromosome"/>
</dbReference>
<dbReference type="GO" id="GO:0005737">
    <property type="term" value="C:cytoplasm"/>
    <property type="evidence" value="ECO:0007669"/>
    <property type="project" value="UniProtKB-ARBA"/>
</dbReference>
<dbReference type="GO" id="GO:1990904">
    <property type="term" value="C:ribonucleoprotein complex"/>
    <property type="evidence" value="ECO:0007669"/>
    <property type="project" value="UniProtKB-KW"/>
</dbReference>
<dbReference type="GO" id="GO:0005840">
    <property type="term" value="C:ribosome"/>
    <property type="evidence" value="ECO:0007669"/>
    <property type="project" value="UniProtKB-KW"/>
</dbReference>
<dbReference type="GO" id="GO:0003735">
    <property type="term" value="F:structural constituent of ribosome"/>
    <property type="evidence" value="ECO:0007669"/>
    <property type="project" value="InterPro"/>
</dbReference>
<dbReference type="GO" id="GO:0006412">
    <property type="term" value="P:translation"/>
    <property type="evidence" value="ECO:0007669"/>
    <property type="project" value="UniProtKB-UniRule"/>
</dbReference>
<dbReference type="Gene3D" id="2.20.28.120">
    <property type="entry name" value="Ribosomal protein L33"/>
    <property type="match status" value="1"/>
</dbReference>
<dbReference type="HAMAP" id="MF_00294">
    <property type="entry name" value="Ribosomal_bL33"/>
    <property type="match status" value="1"/>
</dbReference>
<dbReference type="InterPro" id="IPR001705">
    <property type="entry name" value="Ribosomal_bL33"/>
</dbReference>
<dbReference type="InterPro" id="IPR038584">
    <property type="entry name" value="Ribosomal_bL33_sf"/>
</dbReference>
<dbReference type="InterPro" id="IPR011332">
    <property type="entry name" value="Ribosomal_zn-bd"/>
</dbReference>
<dbReference type="NCBIfam" id="NF001764">
    <property type="entry name" value="PRK00504.1"/>
    <property type="match status" value="1"/>
</dbReference>
<dbReference type="NCBIfam" id="TIGR01023">
    <property type="entry name" value="rpmG_bact"/>
    <property type="match status" value="1"/>
</dbReference>
<dbReference type="Pfam" id="PF00471">
    <property type="entry name" value="Ribosomal_L33"/>
    <property type="match status" value="1"/>
</dbReference>
<dbReference type="SUPFAM" id="SSF57829">
    <property type="entry name" value="Zn-binding ribosomal proteins"/>
    <property type="match status" value="1"/>
</dbReference>
<feature type="chain" id="PRO_0000356508" description="Large ribosomal subunit protein bL33A">
    <location>
        <begin position="1"/>
        <end position="49"/>
    </location>
</feature>
<reference key="1">
    <citation type="journal article" date="2004" name="Proc. Natl. Acad. Sci. U.S.A.">
        <title>The genome sequence of the probiotic intestinal bacterium Lactobacillus johnsonii NCC 533.</title>
        <authorList>
            <person name="Pridmore R.D."/>
            <person name="Berger B."/>
            <person name="Desiere F."/>
            <person name="Vilanova D."/>
            <person name="Barretto C."/>
            <person name="Pittet A.-C."/>
            <person name="Zwahlen M.-C."/>
            <person name="Rouvet M."/>
            <person name="Altermann E."/>
            <person name="Barrangou R."/>
            <person name="Mollet B."/>
            <person name="Mercenier A."/>
            <person name="Klaenhammer T."/>
            <person name="Arigoni F."/>
            <person name="Schell M.A."/>
        </authorList>
    </citation>
    <scope>NUCLEOTIDE SEQUENCE [LARGE SCALE GENOMIC DNA]</scope>
    <source>
        <strain>CNCM I-1225 / La1 / NCC 533</strain>
    </source>
</reference>
<proteinExistence type="inferred from homology"/>
<organism>
    <name type="scientific">Lactobacillus johnsonii (strain CNCM I-12250 / La1 / NCC 533)</name>
    <dbReference type="NCBI Taxonomy" id="257314"/>
    <lineage>
        <taxon>Bacteria</taxon>
        <taxon>Bacillati</taxon>
        <taxon>Bacillota</taxon>
        <taxon>Bacilli</taxon>
        <taxon>Lactobacillales</taxon>
        <taxon>Lactobacillaceae</taxon>
        <taxon>Lactobacillus</taxon>
    </lineage>
</organism>
<sequence length="49" mass="5510">MAVKKAALACTVCGSRNYSIAASKNRTQRLELKKFCKHCGKQTLHKETR</sequence>
<evidence type="ECO:0000255" key="1">
    <source>
        <dbReference type="HAMAP-Rule" id="MF_00294"/>
    </source>
</evidence>
<name>RL331_LACJO</name>
<accession>Q74L17</accession>
<protein>
    <recommendedName>
        <fullName evidence="1">Large ribosomal subunit protein bL33A</fullName>
    </recommendedName>
    <alternativeName>
        <fullName evidence="1">50S ribosomal protein L33 1</fullName>
    </alternativeName>
</protein>
<gene>
    <name evidence="1" type="primary">rpmG1</name>
    <name type="ordered locus">LJ_0408.2</name>
    <name type="ORF">LJ_0408b</name>
</gene>